<keyword id="KW-1003">Cell membrane</keyword>
<keyword id="KW-0472">Membrane</keyword>
<keyword id="KW-1185">Reference proteome</keyword>
<keyword id="KW-0812">Transmembrane</keyword>
<keyword id="KW-1133">Transmembrane helix</keyword>
<keyword id="KW-0813">Transport</keyword>
<reference key="1">
    <citation type="journal article" date="1997" name="Microbiology">
        <title>Analysis of the Bacillus subtilis genome: cloning and nucleotide sequence of a 62 kb region between 275 degrees (rrnB) and 284 degrees (pai).</title>
        <authorList>
            <person name="Oudega B."/>
            <person name="Koningstein G."/>
            <person name="Rodrigues L."/>
            <person name="de Sales Ramon M."/>
            <person name="Hilbert H."/>
            <person name="Duesterhoeft A."/>
            <person name="Pohl T.M."/>
            <person name="Weitzenegger T."/>
        </authorList>
    </citation>
    <scope>NUCLEOTIDE SEQUENCE [GENOMIC DNA]</scope>
    <source>
        <strain>168</strain>
    </source>
</reference>
<reference key="2">
    <citation type="journal article" date="1997" name="Nature">
        <title>The complete genome sequence of the Gram-positive bacterium Bacillus subtilis.</title>
        <authorList>
            <person name="Kunst F."/>
            <person name="Ogasawara N."/>
            <person name="Moszer I."/>
            <person name="Albertini A.M."/>
            <person name="Alloni G."/>
            <person name="Azevedo V."/>
            <person name="Bertero M.G."/>
            <person name="Bessieres P."/>
            <person name="Bolotin A."/>
            <person name="Borchert S."/>
            <person name="Borriss R."/>
            <person name="Boursier L."/>
            <person name="Brans A."/>
            <person name="Braun M."/>
            <person name="Brignell S.C."/>
            <person name="Bron S."/>
            <person name="Brouillet S."/>
            <person name="Bruschi C.V."/>
            <person name="Caldwell B."/>
            <person name="Capuano V."/>
            <person name="Carter N.M."/>
            <person name="Choi S.-K."/>
            <person name="Codani J.-J."/>
            <person name="Connerton I.F."/>
            <person name="Cummings N.J."/>
            <person name="Daniel R.A."/>
            <person name="Denizot F."/>
            <person name="Devine K.M."/>
            <person name="Duesterhoeft A."/>
            <person name="Ehrlich S.D."/>
            <person name="Emmerson P.T."/>
            <person name="Entian K.-D."/>
            <person name="Errington J."/>
            <person name="Fabret C."/>
            <person name="Ferrari E."/>
            <person name="Foulger D."/>
            <person name="Fritz C."/>
            <person name="Fujita M."/>
            <person name="Fujita Y."/>
            <person name="Fuma S."/>
            <person name="Galizzi A."/>
            <person name="Galleron N."/>
            <person name="Ghim S.-Y."/>
            <person name="Glaser P."/>
            <person name="Goffeau A."/>
            <person name="Golightly E.J."/>
            <person name="Grandi G."/>
            <person name="Guiseppi G."/>
            <person name="Guy B.J."/>
            <person name="Haga K."/>
            <person name="Haiech J."/>
            <person name="Harwood C.R."/>
            <person name="Henaut A."/>
            <person name="Hilbert H."/>
            <person name="Holsappel S."/>
            <person name="Hosono S."/>
            <person name="Hullo M.-F."/>
            <person name="Itaya M."/>
            <person name="Jones L.-M."/>
            <person name="Joris B."/>
            <person name="Karamata D."/>
            <person name="Kasahara Y."/>
            <person name="Klaerr-Blanchard M."/>
            <person name="Klein C."/>
            <person name="Kobayashi Y."/>
            <person name="Koetter P."/>
            <person name="Koningstein G."/>
            <person name="Krogh S."/>
            <person name="Kumano M."/>
            <person name="Kurita K."/>
            <person name="Lapidus A."/>
            <person name="Lardinois S."/>
            <person name="Lauber J."/>
            <person name="Lazarevic V."/>
            <person name="Lee S.-M."/>
            <person name="Levine A."/>
            <person name="Liu H."/>
            <person name="Masuda S."/>
            <person name="Mauel C."/>
            <person name="Medigue C."/>
            <person name="Medina N."/>
            <person name="Mellado R.P."/>
            <person name="Mizuno M."/>
            <person name="Moestl D."/>
            <person name="Nakai S."/>
            <person name="Noback M."/>
            <person name="Noone D."/>
            <person name="O'Reilly M."/>
            <person name="Ogawa K."/>
            <person name="Ogiwara A."/>
            <person name="Oudega B."/>
            <person name="Park S.-H."/>
            <person name="Parro V."/>
            <person name="Pohl T.M."/>
            <person name="Portetelle D."/>
            <person name="Porwollik S."/>
            <person name="Prescott A.M."/>
            <person name="Presecan E."/>
            <person name="Pujic P."/>
            <person name="Purnelle B."/>
            <person name="Rapoport G."/>
            <person name="Rey M."/>
            <person name="Reynolds S."/>
            <person name="Rieger M."/>
            <person name="Rivolta C."/>
            <person name="Rocha E."/>
            <person name="Roche B."/>
            <person name="Rose M."/>
            <person name="Sadaie Y."/>
            <person name="Sato T."/>
            <person name="Scanlan E."/>
            <person name="Schleich S."/>
            <person name="Schroeter R."/>
            <person name="Scoffone F."/>
            <person name="Sekiguchi J."/>
            <person name="Sekowska A."/>
            <person name="Seror S.J."/>
            <person name="Serror P."/>
            <person name="Shin B.-S."/>
            <person name="Soldo B."/>
            <person name="Sorokin A."/>
            <person name="Tacconi E."/>
            <person name="Takagi T."/>
            <person name="Takahashi H."/>
            <person name="Takemaru K."/>
            <person name="Takeuchi M."/>
            <person name="Tamakoshi A."/>
            <person name="Tanaka T."/>
            <person name="Terpstra P."/>
            <person name="Tognoni A."/>
            <person name="Tosato V."/>
            <person name="Uchiyama S."/>
            <person name="Vandenbol M."/>
            <person name="Vannier F."/>
            <person name="Vassarotti A."/>
            <person name="Viari A."/>
            <person name="Wambutt R."/>
            <person name="Wedler E."/>
            <person name="Wedler H."/>
            <person name="Weitzenegger T."/>
            <person name="Winters P."/>
            <person name="Wipat A."/>
            <person name="Yamamoto H."/>
            <person name="Yamane K."/>
            <person name="Yasumoto K."/>
            <person name="Yata K."/>
            <person name="Yoshida K."/>
            <person name="Yoshikawa H.-F."/>
            <person name="Zumstein E."/>
            <person name="Yoshikawa H."/>
            <person name="Danchin A."/>
        </authorList>
    </citation>
    <scope>NUCLEOTIDE SEQUENCE [LARGE SCALE GENOMIC DNA]</scope>
    <source>
        <strain>168</strain>
    </source>
</reference>
<reference key="3">
    <citation type="journal article" date="2011" name="J. Bacteriol.">
        <title>CodY-mediated regulation of guanosine uptake in Bacillus subtilis.</title>
        <authorList>
            <person name="Belitsky B.R."/>
            <person name="Sonenshein A.L."/>
        </authorList>
    </citation>
    <scope>FUNCTION</scope>
    <scope>SUBUNIT</scope>
    <scope>INDUCTION</scope>
    <source>
        <strain>168 / SMY</strain>
    </source>
</reference>
<gene>
    <name evidence="3" type="primary">nupP</name>
    <name type="synonym">yufP</name>
    <name type="ordered locus">BSU31560</name>
</gene>
<evidence type="ECO:0000255" key="1"/>
<evidence type="ECO:0000269" key="2">
    <source>
    </source>
</evidence>
<evidence type="ECO:0000303" key="3">
    <source>
    </source>
</evidence>
<evidence type="ECO:0000305" key="4"/>
<evidence type="ECO:0000305" key="5">
    <source>
    </source>
</evidence>
<organism>
    <name type="scientific">Bacillus subtilis (strain 168)</name>
    <dbReference type="NCBI Taxonomy" id="224308"/>
    <lineage>
        <taxon>Bacteria</taxon>
        <taxon>Bacillati</taxon>
        <taxon>Bacillota</taxon>
        <taxon>Bacilli</taxon>
        <taxon>Bacillales</taxon>
        <taxon>Bacillaceae</taxon>
        <taxon>Bacillus</taxon>
    </lineage>
</organism>
<name>NUPP_BACSU</name>
<feature type="chain" id="PRO_0000359915" description="Guanosine ABC transporter permease protein NupP">
    <location>
        <begin position="1"/>
        <end position="348"/>
    </location>
</feature>
<feature type="transmembrane region" description="Helical" evidence="1">
    <location>
        <begin position="8"/>
        <end position="28"/>
    </location>
</feature>
<feature type="transmembrane region" description="Helical" evidence="1">
    <location>
        <begin position="61"/>
        <end position="81"/>
    </location>
</feature>
<feature type="transmembrane region" description="Helical" evidence="1">
    <location>
        <begin position="85"/>
        <end position="105"/>
    </location>
</feature>
<feature type="transmembrane region" description="Helical" evidence="1">
    <location>
        <begin position="107"/>
        <end position="127"/>
    </location>
</feature>
<feature type="transmembrane region" description="Helical" evidence="1">
    <location>
        <begin position="136"/>
        <end position="156"/>
    </location>
</feature>
<feature type="transmembrane region" description="Helical" evidence="1">
    <location>
        <begin position="189"/>
        <end position="209"/>
    </location>
</feature>
<feature type="transmembrane region" description="Helical" evidence="1">
    <location>
        <begin position="237"/>
        <end position="257"/>
    </location>
</feature>
<feature type="transmembrane region" description="Helical" evidence="1">
    <location>
        <begin position="277"/>
        <end position="297"/>
    </location>
</feature>
<feature type="transmembrane region" description="Helical" evidence="1">
    <location>
        <begin position="320"/>
        <end position="340"/>
    </location>
</feature>
<dbReference type="EMBL" id="Z93937">
    <property type="protein sequence ID" value="CAB07938.1"/>
    <property type="molecule type" value="Genomic_DNA"/>
</dbReference>
<dbReference type="EMBL" id="AL009126">
    <property type="protein sequence ID" value="CAB15145.1"/>
    <property type="molecule type" value="Genomic_DNA"/>
</dbReference>
<dbReference type="PIR" id="E70009">
    <property type="entry name" value="E70009"/>
</dbReference>
<dbReference type="RefSeq" id="NP_391034.1">
    <property type="nucleotide sequence ID" value="NC_000964.3"/>
</dbReference>
<dbReference type="RefSeq" id="WP_003243735.1">
    <property type="nucleotide sequence ID" value="NZ_OZ025638.1"/>
</dbReference>
<dbReference type="FunCoup" id="O05254">
    <property type="interactions" value="259"/>
</dbReference>
<dbReference type="STRING" id="224308.BSU31560"/>
<dbReference type="PaxDb" id="224308-BSU31560"/>
<dbReference type="EnsemblBacteria" id="CAB15145">
    <property type="protein sequence ID" value="CAB15145"/>
    <property type="gene ID" value="BSU_31560"/>
</dbReference>
<dbReference type="GeneID" id="937175"/>
<dbReference type="KEGG" id="bsu:BSU31560"/>
<dbReference type="PATRIC" id="fig|224308.179.peg.3421"/>
<dbReference type="eggNOG" id="COG4603">
    <property type="taxonomic scope" value="Bacteria"/>
</dbReference>
<dbReference type="InParanoid" id="O05254"/>
<dbReference type="OrthoDB" id="45037at2"/>
<dbReference type="PhylomeDB" id="O05254"/>
<dbReference type="BioCyc" id="BSUB:BSU31560-MONOMER"/>
<dbReference type="Proteomes" id="UP000001570">
    <property type="component" value="Chromosome"/>
</dbReference>
<dbReference type="GO" id="GO:0005886">
    <property type="term" value="C:plasma membrane"/>
    <property type="evidence" value="ECO:0007669"/>
    <property type="project" value="UniProtKB-SubCell"/>
</dbReference>
<dbReference type="GO" id="GO:0022857">
    <property type="term" value="F:transmembrane transporter activity"/>
    <property type="evidence" value="ECO:0007669"/>
    <property type="project" value="InterPro"/>
</dbReference>
<dbReference type="CDD" id="cd06580">
    <property type="entry name" value="TM_PBP1_transp_TpRbsC_like"/>
    <property type="match status" value="1"/>
</dbReference>
<dbReference type="InterPro" id="IPR001851">
    <property type="entry name" value="ABC_transp_permease"/>
</dbReference>
<dbReference type="InterPro" id="IPR002229">
    <property type="entry name" value="RhesusRHD"/>
</dbReference>
<dbReference type="PANTHER" id="PTHR47089">
    <property type="entry name" value="ABC TRANSPORTER, PERMEASE PROTEIN"/>
    <property type="match status" value="1"/>
</dbReference>
<dbReference type="PANTHER" id="PTHR47089:SF1">
    <property type="entry name" value="GUANOSINE ABC TRANSPORTER PERMEASE PROTEIN NUPP"/>
    <property type="match status" value="1"/>
</dbReference>
<dbReference type="Pfam" id="PF02653">
    <property type="entry name" value="BPD_transp_2"/>
    <property type="match status" value="1"/>
</dbReference>
<dbReference type="PRINTS" id="PR00342">
    <property type="entry name" value="RHESUSRHD"/>
</dbReference>
<sequence length="348" mass="36844">MVKRLSHLLVPLIAIILGLAAGALIMLVSGYSVASGYSALWNGIFGEIYYVGETIRQITPYILSGLAVAFAFRTGLFNIGVEGQLLVGWTAAVWVGTAFDGPAYIHLPLALITAAAAGGLWGFIPGILKARFYVHEVIVTIMMNYIALHMTNYIISNVLTDHQDKTGKIHESASLRSPFLEQITDYSRLHLGIIVALLAAVIMWFIINKSTKGFELRAVGFNQHASQYAGMSVRKNIMTSMLISGAFAGLAGAMEGLGTFEYAAVKGAFTGVGFDGIAVALLGGNTAVGVVLAACLLGGLKIGALNMPIESGVPSEVVDIVIAIIILFVASSYAIRFVMGKLKKKGAN</sequence>
<proteinExistence type="evidence at protein level"/>
<accession>O05254</accession>
<accession>Q795M0</accession>
<comment type="function">
    <text evidence="2 4">Part of an ABC transporter complex involved in the uptake of guanosine (PubMed:21926227). Responsible for the translocation of the substrate across the membrane (Probable). May be a nucleoside transporter of broad specificity but with various affinities for different substrates (PubMed:21926227).</text>
</comment>
<comment type="subunit">
    <text evidence="5">The complex is composed of two ATP-binding proteins (NupO), two transmembrane proteins (NupP and NupQ) and a solute-binding protein (NupN).</text>
</comment>
<comment type="subcellular location">
    <subcellularLocation>
        <location evidence="4">Cell membrane</location>
        <topology evidence="1">Multi-pass membrane protein</topology>
    </subcellularLocation>
</comment>
<comment type="induction">
    <text evidence="2">Transcriptionally regulated by CodY.</text>
</comment>
<comment type="similarity">
    <text evidence="4">Belongs to the binding-protein-dependent transport system permease family.</text>
</comment>
<protein>
    <recommendedName>
        <fullName evidence="4">Guanosine ABC transporter permease protein NupP</fullName>
    </recommendedName>
</protein>